<dbReference type="EC" id="6.2.1.5" evidence="1"/>
<dbReference type="EMBL" id="CP000227">
    <property type="protein sequence ID" value="ACM14049.1"/>
    <property type="molecule type" value="Genomic_DNA"/>
</dbReference>
<dbReference type="SMR" id="B9IVC5"/>
<dbReference type="KEGG" id="bcq:BCQ_3621"/>
<dbReference type="HOGENOM" id="CLU_037430_0_2_9"/>
<dbReference type="UniPathway" id="UPA00223">
    <property type="reaction ID" value="UER00999"/>
</dbReference>
<dbReference type="Proteomes" id="UP000000441">
    <property type="component" value="Chromosome"/>
</dbReference>
<dbReference type="GO" id="GO:0005829">
    <property type="term" value="C:cytosol"/>
    <property type="evidence" value="ECO:0007669"/>
    <property type="project" value="TreeGrafter"/>
</dbReference>
<dbReference type="GO" id="GO:0042709">
    <property type="term" value="C:succinate-CoA ligase complex"/>
    <property type="evidence" value="ECO:0007669"/>
    <property type="project" value="TreeGrafter"/>
</dbReference>
<dbReference type="GO" id="GO:0005524">
    <property type="term" value="F:ATP binding"/>
    <property type="evidence" value="ECO:0007669"/>
    <property type="project" value="UniProtKB-UniRule"/>
</dbReference>
<dbReference type="GO" id="GO:0000287">
    <property type="term" value="F:magnesium ion binding"/>
    <property type="evidence" value="ECO:0007669"/>
    <property type="project" value="UniProtKB-UniRule"/>
</dbReference>
<dbReference type="GO" id="GO:0004775">
    <property type="term" value="F:succinate-CoA ligase (ADP-forming) activity"/>
    <property type="evidence" value="ECO:0007669"/>
    <property type="project" value="UniProtKB-UniRule"/>
</dbReference>
<dbReference type="GO" id="GO:0004776">
    <property type="term" value="F:succinate-CoA ligase (GDP-forming) activity"/>
    <property type="evidence" value="ECO:0007669"/>
    <property type="project" value="RHEA"/>
</dbReference>
<dbReference type="GO" id="GO:0006104">
    <property type="term" value="P:succinyl-CoA metabolic process"/>
    <property type="evidence" value="ECO:0007669"/>
    <property type="project" value="TreeGrafter"/>
</dbReference>
<dbReference type="GO" id="GO:0006099">
    <property type="term" value="P:tricarboxylic acid cycle"/>
    <property type="evidence" value="ECO:0007669"/>
    <property type="project" value="UniProtKB-UniRule"/>
</dbReference>
<dbReference type="FunFam" id="3.30.1490.20:FF:000002">
    <property type="entry name" value="Succinate--CoA ligase [ADP-forming] subunit beta"/>
    <property type="match status" value="1"/>
</dbReference>
<dbReference type="FunFam" id="3.30.470.20:FF:000002">
    <property type="entry name" value="Succinate--CoA ligase [ADP-forming] subunit beta"/>
    <property type="match status" value="1"/>
</dbReference>
<dbReference type="FunFam" id="3.40.50.261:FF:000001">
    <property type="entry name" value="Succinate--CoA ligase [ADP-forming] subunit beta"/>
    <property type="match status" value="1"/>
</dbReference>
<dbReference type="Gene3D" id="3.30.1490.20">
    <property type="entry name" value="ATP-grasp fold, A domain"/>
    <property type="match status" value="1"/>
</dbReference>
<dbReference type="Gene3D" id="3.30.470.20">
    <property type="entry name" value="ATP-grasp fold, B domain"/>
    <property type="match status" value="1"/>
</dbReference>
<dbReference type="Gene3D" id="3.40.50.261">
    <property type="entry name" value="Succinyl-CoA synthetase domains"/>
    <property type="match status" value="1"/>
</dbReference>
<dbReference type="HAMAP" id="MF_00558">
    <property type="entry name" value="Succ_CoA_beta"/>
    <property type="match status" value="1"/>
</dbReference>
<dbReference type="InterPro" id="IPR011761">
    <property type="entry name" value="ATP-grasp"/>
</dbReference>
<dbReference type="InterPro" id="IPR013650">
    <property type="entry name" value="ATP-grasp_succ-CoA_synth-type"/>
</dbReference>
<dbReference type="InterPro" id="IPR013815">
    <property type="entry name" value="ATP_grasp_subdomain_1"/>
</dbReference>
<dbReference type="InterPro" id="IPR005811">
    <property type="entry name" value="SUCC_ACL_C"/>
</dbReference>
<dbReference type="InterPro" id="IPR005809">
    <property type="entry name" value="Succ_CoA_ligase-like_bsu"/>
</dbReference>
<dbReference type="InterPro" id="IPR016102">
    <property type="entry name" value="Succinyl-CoA_synth-like"/>
</dbReference>
<dbReference type="NCBIfam" id="NF001913">
    <property type="entry name" value="PRK00696.1"/>
    <property type="match status" value="1"/>
</dbReference>
<dbReference type="NCBIfam" id="TIGR01016">
    <property type="entry name" value="sucCoAbeta"/>
    <property type="match status" value="1"/>
</dbReference>
<dbReference type="PANTHER" id="PTHR11815:SF10">
    <property type="entry name" value="SUCCINATE--COA LIGASE [GDP-FORMING] SUBUNIT BETA, MITOCHONDRIAL"/>
    <property type="match status" value="1"/>
</dbReference>
<dbReference type="PANTHER" id="PTHR11815">
    <property type="entry name" value="SUCCINYL-COA SYNTHETASE BETA CHAIN"/>
    <property type="match status" value="1"/>
</dbReference>
<dbReference type="Pfam" id="PF08442">
    <property type="entry name" value="ATP-grasp_2"/>
    <property type="match status" value="1"/>
</dbReference>
<dbReference type="Pfam" id="PF00549">
    <property type="entry name" value="Ligase_CoA"/>
    <property type="match status" value="1"/>
</dbReference>
<dbReference type="PIRSF" id="PIRSF001554">
    <property type="entry name" value="SucCS_beta"/>
    <property type="match status" value="1"/>
</dbReference>
<dbReference type="SUPFAM" id="SSF56059">
    <property type="entry name" value="Glutathione synthetase ATP-binding domain-like"/>
    <property type="match status" value="1"/>
</dbReference>
<dbReference type="SUPFAM" id="SSF52210">
    <property type="entry name" value="Succinyl-CoA synthetase domains"/>
    <property type="match status" value="1"/>
</dbReference>
<dbReference type="PROSITE" id="PS50975">
    <property type="entry name" value="ATP_GRASP"/>
    <property type="match status" value="1"/>
</dbReference>
<feature type="chain" id="PRO_1000197697" description="Succinate--CoA ligase [ADP-forming] subunit beta">
    <location>
        <begin position="1"/>
        <end position="386"/>
    </location>
</feature>
<feature type="domain" description="ATP-grasp" evidence="1">
    <location>
        <begin position="9"/>
        <end position="244"/>
    </location>
</feature>
<feature type="binding site" evidence="1">
    <location>
        <position position="46"/>
    </location>
    <ligand>
        <name>ATP</name>
        <dbReference type="ChEBI" id="CHEBI:30616"/>
    </ligand>
</feature>
<feature type="binding site" evidence="1">
    <location>
        <begin position="53"/>
        <end position="55"/>
    </location>
    <ligand>
        <name>ATP</name>
        <dbReference type="ChEBI" id="CHEBI:30616"/>
    </ligand>
</feature>
<feature type="binding site" evidence="1">
    <location>
        <position position="99"/>
    </location>
    <ligand>
        <name>ATP</name>
        <dbReference type="ChEBI" id="CHEBI:30616"/>
    </ligand>
</feature>
<feature type="binding site" evidence="1">
    <location>
        <position position="102"/>
    </location>
    <ligand>
        <name>ATP</name>
        <dbReference type="ChEBI" id="CHEBI:30616"/>
    </ligand>
</feature>
<feature type="binding site" evidence="1">
    <location>
        <position position="107"/>
    </location>
    <ligand>
        <name>ATP</name>
        <dbReference type="ChEBI" id="CHEBI:30616"/>
    </ligand>
</feature>
<feature type="binding site" evidence="1">
    <location>
        <position position="199"/>
    </location>
    <ligand>
        <name>Mg(2+)</name>
        <dbReference type="ChEBI" id="CHEBI:18420"/>
    </ligand>
</feature>
<feature type="binding site" evidence="1">
    <location>
        <position position="213"/>
    </location>
    <ligand>
        <name>Mg(2+)</name>
        <dbReference type="ChEBI" id="CHEBI:18420"/>
    </ligand>
</feature>
<feature type="binding site" evidence="1">
    <location>
        <position position="264"/>
    </location>
    <ligand>
        <name>substrate</name>
        <note>ligand shared with subunit alpha</note>
    </ligand>
</feature>
<feature type="binding site" evidence="1">
    <location>
        <begin position="321"/>
        <end position="323"/>
    </location>
    <ligand>
        <name>substrate</name>
        <note>ligand shared with subunit alpha</note>
    </ligand>
</feature>
<keyword id="KW-0067">ATP-binding</keyword>
<keyword id="KW-0436">Ligase</keyword>
<keyword id="KW-0460">Magnesium</keyword>
<keyword id="KW-0479">Metal-binding</keyword>
<keyword id="KW-0547">Nucleotide-binding</keyword>
<keyword id="KW-0816">Tricarboxylic acid cycle</keyword>
<accession>B9IVC5</accession>
<comment type="function">
    <text evidence="1">Succinyl-CoA synthetase functions in the citric acid cycle (TCA), coupling the hydrolysis of succinyl-CoA to the synthesis of either ATP or GTP and thus represents the only step of substrate-level phosphorylation in the TCA. The beta subunit provides nucleotide specificity of the enzyme and binds the substrate succinate, while the binding sites for coenzyme A and phosphate are found in the alpha subunit.</text>
</comment>
<comment type="catalytic activity">
    <reaction evidence="1">
        <text>succinate + ATP + CoA = succinyl-CoA + ADP + phosphate</text>
        <dbReference type="Rhea" id="RHEA:17661"/>
        <dbReference type="ChEBI" id="CHEBI:30031"/>
        <dbReference type="ChEBI" id="CHEBI:30616"/>
        <dbReference type="ChEBI" id="CHEBI:43474"/>
        <dbReference type="ChEBI" id="CHEBI:57287"/>
        <dbReference type="ChEBI" id="CHEBI:57292"/>
        <dbReference type="ChEBI" id="CHEBI:456216"/>
        <dbReference type="EC" id="6.2.1.5"/>
    </reaction>
    <physiologicalReaction direction="right-to-left" evidence="1">
        <dbReference type="Rhea" id="RHEA:17663"/>
    </physiologicalReaction>
</comment>
<comment type="catalytic activity">
    <reaction evidence="1">
        <text>GTP + succinate + CoA = succinyl-CoA + GDP + phosphate</text>
        <dbReference type="Rhea" id="RHEA:22120"/>
        <dbReference type="ChEBI" id="CHEBI:30031"/>
        <dbReference type="ChEBI" id="CHEBI:37565"/>
        <dbReference type="ChEBI" id="CHEBI:43474"/>
        <dbReference type="ChEBI" id="CHEBI:57287"/>
        <dbReference type="ChEBI" id="CHEBI:57292"/>
        <dbReference type="ChEBI" id="CHEBI:58189"/>
    </reaction>
    <physiologicalReaction direction="right-to-left" evidence="1">
        <dbReference type="Rhea" id="RHEA:22122"/>
    </physiologicalReaction>
</comment>
<comment type="cofactor">
    <cofactor evidence="1">
        <name>Mg(2+)</name>
        <dbReference type="ChEBI" id="CHEBI:18420"/>
    </cofactor>
    <text evidence="1">Binds 1 Mg(2+) ion per subunit.</text>
</comment>
<comment type="pathway">
    <text evidence="1">Carbohydrate metabolism; tricarboxylic acid cycle; succinate from succinyl-CoA (ligase route): step 1/1.</text>
</comment>
<comment type="subunit">
    <text evidence="1">Heterotetramer of two alpha and two beta subunits.</text>
</comment>
<comment type="similarity">
    <text evidence="1">Belongs to the succinate/malate CoA ligase beta subunit family.</text>
</comment>
<name>SUCC_BACCQ</name>
<evidence type="ECO:0000255" key="1">
    <source>
        <dbReference type="HAMAP-Rule" id="MF_00558"/>
    </source>
</evidence>
<gene>
    <name evidence="1" type="primary">sucC</name>
    <name type="ordered locus">BCQ_3621</name>
</gene>
<sequence>MNIHEYQGKAVLRSYGVSVPNGKVAFTVEEAVEAAKELGTDVCVVKAQIHAGGRGKAGGVKVAKNLDEVRTYAESILGTTLVTHQTGPEGKEVKRLLIEEGCDIKKEYYVGLVLDRATSQVVLMASEEGGTEIEEVAEKTPEKIFKEYIDPAVGLQGFQARRIAFNINIPKELVGQAVKFMMGLYRAFIEKDCSIAEINPLVTTGDGKVMALDAKLNFDSNALYRHKDILELRDLDEEDAKEIEASKYDLNYIPLDGNIGCMVNGAGLAMATMDIIKHYHGDPANFLDVGGGATAEKVTEAFKIILSDKNVKGIFVNIFGGIMKCDVIAEGVIEATKQVGLELPLVVRLEGTNVELGKKILNESGLNIVAAESMADGAQKIVSLVG</sequence>
<protein>
    <recommendedName>
        <fullName evidence="1">Succinate--CoA ligase [ADP-forming] subunit beta</fullName>
        <ecNumber evidence="1">6.2.1.5</ecNumber>
    </recommendedName>
    <alternativeName>
        <fullName evidence="1">Succinyl-CoA synthetase subunit beta</fullName>
        <shortName evidence="1">SCS-beta</shortName>
    </alternativeName>
</protein>
<organism>
    <name type="scientific">Bacillus cereus (strain Q1)</name>
    <dbReference type="NCBI Taxonomy" id="361100"/>
    <lineage>
        <taxon>Bacteria</taxon>
        <taxon>Bacillati</taxon>
        <taxon>Bacillota</taxon>
        <taxon>Bacilli</taxon>
        <taxon>Bacillales</taxon>
        <taxon>Bacillaceae</taxon>
        <taxon>Bacillus</taxon>
        <taxon>Bacillus cereus group</taxon>
    </lineage>
</organism>
<reference key="1">
    <citation type="journal article" date="2009" name="J. Bacteriol.">
        <title>Complete genome sequence of the extremophilic Bacillus cereus strain Q1 with industrial applications.</title>
        <authorList>
            <person name="Xiong Z."/>
            <person name="Jiang Y."/>
            <person name="Qi D."/>
            <person name="Lu H."/>
            <person name="Yang F."/>
            <person name="Yang J."/>
            <person name="Chen L."/>
            <person name="Sun L."/>
            <person name="Xu X."/>
            <person name="Xue Y."/>
            <person name="Zhu Y."/>
            <person name="Jin Q."/>
        </authorList>
    </citation>
    <scope>NUCLEOTIDE SEQUENCE [LARGE SCALE GENOMIC DNA]</scope>
    <source>
        <strain>Q1</strain>
    </source>
</reference>
<proteinExistence type="inferred from homology"/>